<dbReference type="EMBL" id="M30134">
    <property type="protein sequence ID" value="AAA36400.1"/>
    <property type="molecule type" value="mRNA"/>
</dbReference>
<dbReference type="EMBL" id="X17543">
    <property type="protein sequence ID" value="CAA35581.1"/>
    <property type="molecule type" value="mRNA"/>
</dbReference>
<dbReference type="EMBL" id="S63356">
    <property type="protein sequence ID" value="AAB19823.1"/>
    <property type="molecule type" value="mRNA"/>
</dbReference>
<dbReference type="EMBL" id="M30135">
    <property type="protein sequence ID" value="AAA35887.1"/>
    <property type="molecule type" value="Genomic_DNA"/>
</dbReference>
<dbReference type="EMBL" id="M86593">
    <property type="protein sequence ID" value="AAA59161.1"/>
    <property type="molecule type" value="Genomic_DNA"/>
</dbReference>
<dbReference type="EMBL" id="AF361105">
    <property type="protein sequence ID" value="AAK26666.1"/>
    <property type="molecule type" value="Genomic_DNA"/>
</dbReference>
<dbReference type="EMBL" id="AC002428">
    <property type="protein sequence ID" value="AAB66904.1"/>
    <property type="molecule type" value="Genomic_DNA"/>
</dbReference>
<dbReference type="EMBL" id="AC004763">
    <property type="protein sequence ID" value="AAC17735.1"/>
    <property type="molecule type" value="Genomic_DNA"/>
</dbReference>
<dbReference type="EMBL" id="BC066283">
    <property type="protein sequence ID" value="AAH66283.1"/>
    <property type="molecule type" value="mRNA"/>
</dbReference>
<dbReference type="EMBL" id="BC066285">
    <property type="protein sequence ID" value="AAH66285.1"/>
    <property type="molecule type" value="mRNA"/>
</dbReference>
<dbReference type="EMBL" id="BC066286">
    <property type="protein sequence ID" value="AAH66286.1"/>
    <property type="molecule type" value="mRNA"/>
</dbReference>
<dbReference type="CCDS" id="CCDS4189.1"/>
<dbReference type="PIR" id="A60480">
    <property type="entry name" value="A60480"/>
</dbReference>
<dbReference type="RefSeq" id="NP_000581.1">
    <property type="nucleotide sequence ID" value="NM_000590.2"/>
</dbReference>
<dbReference type="PDB" id="7OX1">
    <property type="method" value="X-ray"/>
    <property type="resolution" value="2.49 A"/>
    <property type="chains" value="G/X/Y/Z=19-144"/>
</dbReference>
<dbReference type="PDB" id="7OX2">
    <property type="method" value="X-ray"/>
    <property type="resolution" value="3.34 A"/>
    <property type="chains" value="M/N/O/T=19-144"/>
</dbReference>
<dbReference type="PDB" id="7OX3">
    <property type="method" value="X-ray"/>
    <property type="resolution" value="1.70 A"/>
    <property type="chains" value="C=19-144"/>
</dbReference>
<dbReference type="PDB" id="7OX5">
    <property type="method" value="X-ray"/>
    <property type="resolution" value="3.09 A"/>
    <property type="chains" value="B/D/F/H/J/L/N/P=19-144"/>
</dbReference>
<dbReference type="PDB" id="7OX6">
    <property type="method" value="NMR"/>
    <property type="chains" value="A=19-144"/>
</dbReference>
<dbReference type="PDBsum" id="7OX1"/>
<dbReference type="PDBsum" id="7OX2"/>
<dbReference type="PDBsum" id="7OX3"/>
<dbReference type="PDBsum" id="7OX5"/>
<dbReference type="PDBsum" id="7OX6"/>
<dbReference type="SMR" id="P15248"/>
<dbReference type="BioGRID" id="109792">
    <property type="interactions" value="4"/>
</dbReference>
<dbReference type="DIP" id="DIP-3155N"/>
<dbReference type="FunCoup" id="P15248">
    <property type="interactions" value="432"/>
</dbReference>
<dbReference type="STRING" id="9606.ENSP00000274520"/>
<dbReference type="ChEMBL" id="CHEMBL3712932"/>
<dbReference type="GlyCosmos" id="P15248">
    <property type="glycosylation" value="4 sites, No reported glycans"/>
</dbReference>
<dbReference type="GlyGen" id="P15248">
    <property type="glycosylation" value="4 sites"/>
</dbReference>
<dbReference type="iPTMnet" id="P15248"/>
<dbReference type="PhosphoSitePlus" id="P15248"/>
<dbReference type="BioMuta" id="IL9"/>
<dbReference type="DMDM" id="124362"/>
<dbReference type="PaxDb" id="9606-ENSP00000274520"/>
<dbReference type="PeptideAtlas" id="P15248"/>
<dbReference type="ABCD" id="P15248">
    <property type="antibodies" value="17 sequenced antibodies"/>
</dbReference>
<dbReference type="Antibodypedia" id="14762">
    <property type="antibodies" value="661 antibodies from 40 providers"/>
</dbReference>
<dbReference type="DNASU" id="3578"/>
<dbReference type="Ensembl" id="ENST00000274520.2">
    <property type="protein sequence ID" value="ENSP00000274520.1"/>
    <property type="gene ID" value="ENSG00000145839.2"/>
</dbReference>
<dbReference type="GeneID" id="3578"/>
<dbReference type="KEGG" id="hsa:3578"/>
<dbReference type="MANE-Select" id="ENST00000274520.2">
    <property type="protein sequence ID" value="ENSP00000274520.1"/>
    <property type="RefSeq nucleotide sequence ID" value="NM_000590.2"/>
    <property type="RefSeq protein sequence ID" value="NP_000581.1"/>
</dbReference>
<dbReference type="UCSC" id="uc003lbb.1">
    <property type="organism name" value="human"/>
</dbReference>
<dbReference type="AGR" id="HGNC:6029"/>
<dbReference type="CTD" id="3578"/>
<dbReference type="DisGeNET" id="3578"/>
<dbReference type="GeneCards" id="IL9"/>
<dbReference type="HGNC" id="HGNC:6029">
    <property type="gene designation" value="IL9"/>
</dbReference>
<dbReference type="HPA" id="ENSG00000145839">
    <property type="expression patterns" value="Not detected"/>
</dbReference>
<dbReference type="MIM" id="146931">
    <property type="type" value="gene"/>
</dbReference>
<dbReference type="neXtProt" id="NX_P15248"/>
<dbReference type="OpenTargets" id="ENSG00000145839"/>
<dbReference type="PharmGKB" id="PA29845"/>
<dbReference type="VEuPathDB" id="HostDB:ENSG00000145839"/>
<dbReference type="eggNOG" id="ENOG502TDE1">
    <property type="taxonomic scope" value="Eukaryota"/>
</dbReference>
<dbReference type="GeneTree" id="ENSGT00390000015384"/>
<dbReference type="HOGENOM" id="CLU_150120_0_0_1"/>
<dbReference type="InParanoid" id="P15248"/>
<dbReference type="OMA" id="IPSDNCP"/>
<dbReference type="OrthoDB" id="9831043at2759"/>
<dbReference type="PAN-GO" id="P15248">
    <property type="GO annotations" value="3 GO annotations based on evolutionary models"/>
</dbReference>
<dbReference type="PhylomeDB" id="P15248"/>
<dbReference type="TreeFam" id="TF336367"/>
<dbReference type="PathwayCommons" id="P15248"/>
<dbReference type="Reactome" id="R-HSA-8985947">
    <property type="pathway name" value="Interleukin-9 signaling"/>
</dbReference>
<dbReference type="SignaLink" id="P15248"/>
<dbReference type="SIGNOR" id="P15248"/>
<dbReference type="BioGRID-ORCS" id="3578">
    <property type="hits" value="8 hits in 1137 CRISPR screens"/>
</dbReference>
<dbReference type="GeneWiki" id="Interleukin_9"/>
<dbReference type="GenomeRNAi" id="3578"/>
<dbReference type="Pharos" id="P15248">
    <property type="development level" value="Tbio"/>
</dbReference>
<dbReference type="PRO" id="PR:P15248"/>
<dbReference type="Proteomes" id="UP000005640">
    <property type="component" value="Chromosome 5"/>
</dbReference>
<dbReference type="RNAct" id="P15248">
    <property type="molecule type" value="protein"/>
</dbReference>
<dbReference type="Bgee" id="ENSG00000145839">
    <property type="expression patterns" value="Expressed in tibial nerve and 56 other cell types or tissues"/>
</dbReference>
<dbReference type="GO" id="GO:0005576">
    <property type="term" value="C:extracellular region"/>
    <property type="evidence" value="ECO:0000304"/>
    <property type="project" value="Reactome"/>
</dbReference>
<dbReference type="GO" id="GO:0005615">
    <property type="term" value="C:extracellular space"/>
    <property type="evidence" value="ECO:0000314"/>
    <property type="project" value="UniProt"/>
</dbReference>
<dbReference type="GO" id="GO:0005125">
    <property type="term" value="F:cytokine activity"/>
    <property type="evidence" value="ECO:0000314"/>
    <property type="project" value="UniProt"/>
</dbReference>
<dbReference type="GO" id="GO:0008083">
    <property type="term" value="F:growth factor activity"/>
    <property type="evidence" value="ECO:0007669"/>
    <property type="project" value="UniProtKB-KW"/>
</dbReference>
<dbReference type="GO" id="GO:0005140">
    <property type="term" value="F:interleukin-9 receptor binding"/>
    <property type="evidence" value="ECO:0000318"/>
    <property type="project" value="GO_Central"/>
</dbReference>
<dbReference type="GO" id="GO:0030183">
    <property type="term" value="P:B cell differentiation"/>
    <property type="evidence" value="ECO:0007669"/>
    <property type="project" value="Ensembl"/>
</dbReference>
<dbReference type="GO" id="GO:0042100">
    <property type="term" value="P:B cell proliferation"/>
    <property type="evidence" value="ECO:0007669"/>
    <property type="project" value="Ensembl"/>
</dbReference>
<dbReference type="GO" id="GO:0016064">
    <property type="term" value="P:immunoglobulin mediated immune response"/>
    <property type="evidence" value="ECO:0007669"/>
    <property type="project" value="Ensembl"/>
</dbReference>
<dbReference type="GO" id="GO:0006954">
    <property type="term" value="P:inflammatory response"/>
    <property type="evidence" value="ECO:0000304"/>
    <property type="project" value="ProtInc"/>
</dbReference>
<dbReference type="GO" id="GO:0038113">
    <property type="term" value="P:interleukin-9-mediated signaling pathway"/>
    <property type="evidence" value="ECO:0000314"/>
    <property type="project" value="UniProt"/>
</dbReference>
<dbReference type="GO" id="GO:0030307">
    <property type="term" value="P:positive regulation of cell growth"/>
    <property type="evidence" value="ECO:0007669"/>
    <property type="project" value="Ensembl"/>
</dbReference>
<dbReference type="GO" id="GO:0008284">
    <property type="term" value="P:positive regulation of cell population proliferation"/>
    <property type="evidence" value="ECO:0000304"/>
    <property type="project" value="ProtInc"/>
</dbReference>
<dbReference type="GO" id="GO:0032754">
    <property type="term" value="P:positive regulation of interleukin-5 production"/>
    <property type="evidence" value="ECO:0000250"/>
    <property type="project" value="UniProtKB"/>
</dbReference>
<dbReference type="GO" id="GO:0046425">
    <property type="term" value="P:regulation of receptor signaling pathway via JAK-STAT"/>
    <property type="evidence" value="ECO:0007669"/>
    <property type="project" value="Ensembl"/>
</dbReference>
<dbReference type="InterPro" id="IPR018049">
    <property type="entry name" value="IL-7/IL-9_CS"/>
</dbReference>
<dbReference type="InterPro" id="IPR020447">
    <property type="entry name" value="IL-9"/>
</dbReference>
<dbReference type="PANTHER" id="PTHR16926">
    <property type="entry name" value="INTERLEUKIN 9"/>
    <property type="match status" value="1"/>
</dbReference>
<dbReference type="PANTHER" id="PTHR16926:SF1">
    <property type="entry name" value="INTERLEUKIN-9"/>
    <property type="match status" value="1"/>
</dbReference>
<dbReference type="PRINTS" id="PR01926">
    <property type="entry name" value="INTERLEUKIN9"/>
</dbReference>
<dbReference type="PROSITE" id="PS00255">
    <property type="entry name" value="INTERLEUKIN_7_9"/>
    <property type="match status" value="1"/>
</dbReference>
<accession>P15248</accession>
<evidence type="ECO:0000250" key="1">
    <source>
        <dbReference type="UniProtKB" id="P15247"/>
    </source>
</evidence>
<evidence type="ECO:0000255" key="2"/>
<evidence type="ECO:0000269" key="3">
    <source>
    </source>
</evidence>
<evidence type="ECO:0000269" key="4">
    <source ref="5"/>
</evidence>
<evidence type="ECO:0000305" key="5"/>
<evidence type="ECO:0007829" key="6">
    <source>
        <dbReference type="PDB" id="7OX3"/>
    </source>
</evidence>
<evidence type="ECO:0007829" key="7">
    <source>
        <dbReference type="PDB" id="7OX5"/>
    </source>
</evidence>
<evidence type="ECO:0007829" key="8">
    <source>
        <dbReference type="PDB" id="7OX6"/>
    </source>
</evidence>
<proteinExistence type="evidence at protein level"/>
<name>IL9_HUMAN</name>
<feature type="signal peptide">
    <location>
        <begin position="1"/>
        <end position="18"/>
    </location>
</feature>
<feature type="chain" id="PRO_0000015627" description="Interleukin-9">
    <location>
        <begin position="19"/>
        <end position="144"/>
    </location>
</feature>
<feature type="modified residue" description="Pyrrolidone carboxylic acid" evidence="1">
    <location>
        <position position="19"/>
    </location>
</feature>
<feature type="glycosylation site" description="N-linked (GlcNAc...) asparagine" evidence="2">
    <location>
        <position position="50"/>
    </location>
</feature>
<feature type="glycosylation site" description="N-linked (GlcNAc...) asparagine" evidence="2">
    <location>
        <position position="63"/>
    </location>
</feature>
<feature type="glycosylation site" description="N-linked (GlcNAc...) asparagine" evidence="2">
    <location>
        <position position="78"/>
    </location>
</feature>
<feature type="glycosylation site" description="N-linked (GlcNAc...) asparagine" evidence="2">
    <location>
        <position position="114"/>
    </location>
</feature>
<feature type="sequence variant" id="VAR_013079" description="In dbSNP:rs2069885." evidence="4">
    <original>T</original>
    <variation>M</variation>
    <location>
        <position position="117"/>
    </location>
</feature>
<feature type="helix" evidence="6">
    <location>
        <begin position="24"/>
        <end position="37"/>
    </location>
</feature>
<feature type="helix" evidence="6">
    <location>
        <begin position="41"/>
        <end position="44"/>
    </location>
</feature>
<feature type="strand" evidence="6">
    <location>
        <begin position="47"/>
        <end position="50"/>
    </location>
</feature>
<feature type="strand" evidence="6">
    <location>
        <begin position="57"/>
        <end position="59"/>
    </location>
</feature>
<feature type="strand" evidence="8">
    <location>
        <begin position="64"/>
        <end position="66"/>
    </location>
</feature>
<feature type="helix" evidence="6">
    <location>
        <begin position="69"/>
        <end position="75"/>
    </location>
</feature>
<feature type="helix" evidence="6">
    <location>
        <begin position="80"/>
        <end position="84"/>
    </location>
</feature>
<feature type="helix" evidence="6">
    <location>
        <begin position="86"/>
        <end position="101"/>
    </location>
</feature>
<feature type="helix" evidence="7">
    <location>
        <begin position="105"/>
        <end position="107"/>
    </location>
</feature>
<feature type="helix" evidence="8">
    <location>
        <begin position="108"/>
        <end position="110"/>
    </location>
</feature>
<feature type="strand" evidence="6">
    <location>
        <begin position="117"/>
        <end position="119"/>
    </location>
</feature>
<feature type="helix" evidence="6">
    <location>
        <begin position="121"/>
        <end position="137"/>
    </location>
</feature>
<reference key="1">
    <citation type="journal article" date="1989" name="Blood">
        <title>Expression cloning of cDNA encoding a novel human hematopoietic growth factor: human homologue of murine T-cell growth factor P40.</title>
        <authorList>
            <person name="Yang Y.C."/>
            <person name="Ricciardi S."/>
            <person name="Ciarletta A."/>
            <person name="Calvetti J.A."/>
            <person name="Kelleher K."/>
            <person name="Clark S.C."/>
        </authorList>
    </citation>
    <scope>NUCLEOTIDE SEQUENCE [MRNA]</scope>
</reference>
<reference key="2">
    <citation type="journal article" date="1990" name="Cytokine">
        <title>Cloning and expression of a cDNA for the human homolog of mouse T cell and mast cell growth factor P40.</title>
        <authorList>
            <person name="Renauld J.-C."/>
            <person name="Goethals A."/>
            <person name="Houssiau F."/>
            <person name="van Roost E."/>
            <person name="van Snick J."/>
        </authorList>
    </citation>
    <scope>NUCLEOTIDE SEQUENCE [MRNA]</scope>
</reference>
<reference key="3">
    <citation type="journal article" date="1990" name="J. Immunol.">
        <title>Human P40/IL-9. Expression in activated CD4+ T cells, genomic organization, and comparison with the mouse gene.</title>
        <authorList>
            <person name="Renauld J.-C."/>
            <person name="Goethals A."/>
            <person name="Houssiau F."/>
            <person name="Merz H."/>
            <person name="van Roost E."/>
            <person name="van Snick J."/>
        </authorList>
    </citation>
    <scope>NUCLEOTIDE SEQUENCE [GENOMIC DNA]</scope>
</reference>
<reference key="4">
    <citation type="journal article" date="1991" name="Blood">
        <title>Human interleukin-9: genomic sequence, chromosomal location, and sequences essential for its expression in human T-cell leukemia virus (HTLV)-I-transformed human T cells.</title>
        <authorList>
            <person name="Kelleher K."/>
            <person name="Bean K."/>
            <person name="Clark S.C."/>
            <person name="Leung W.Y."/>
            <person name="Yang-Feng T.L."/>
            <person name="Chen J.W."/>
            <person name="Lin P.F."/>
            <person name="Luo W."/>
            <person name="Yang Y.C."/>
        </authorList>
    </citation>
    <scope>NUCLEOTIDE SEQUENCE [GENOMIC DNA]</scope>
    <source>
        <tissue>Leukocyte</tissue>
    </source>
</reference>
<reference key="5">
    <citation type="submission" date="2001-03" db="EMBL/GenBank/DDBJ databases">
        <authorList>
            <consortium name="SeattleSNPs variation discovery resource"/>
        </authorList>
    </citation>
    <scope>NUCLEOTIDE SEQUENCE [GENOMIC DNA]</scope>
    <scope>VARIANT MET-117</scope>
</reference>
<reference key="6">
    <citation type="journal article" date="2004" name="Nature">
        <title>The DNA sequence and comparative analysis of human chromosome 5.</title>
        <authorList>
            <person name="Schmutz J."/>
            <person name="Martin J."/>
            <person name="Terry A."/>
            <person name="Couronne O."/>
            <person name="Grimwood J."/>
            <person name="Lowry S."/>
            <person name="Gordon L.A."/>
            <person name="Scott D."/>
            <person name="Xie G."/>
            <person name="Huang W."/>
            <person name="Hellsten U."/>
            <person name="Tran-Gyamfi M."/>
            <person name="She X."/>
            <person name="Prabhakar S."/>
            <person name="Aerts A."/>
            <person name="Altherr M."/>
            <person name="Bajorek E."/>
            <person name="Black S."/>
            <person name="Branscomb E."/>
            <person name="Caoile C."/>
            <person name="Challacombe J.F."/>
            <person name="Chan Y.M."/>
            <person name="Denys M."/>
            <person name="Detter J.C."/>
            <person name="Escobar J."/>
            <person name="Flowers D."/>
            <person name="Fotopulos D."/>
            <person name="Glavina T."/>
            <person name="Gomez M."/>
            <person name="Gonzales E."/>
            <person name="Goodstein D."/>
            <person name="Grigoriev I."/>
            <person name="Groza M."/>
            <person name="Hammon N."/>
            <person name="Hawkins T."/>
            <person name="Haydu L."/>
            <person name="Israni S."/>
            <person name="Jett J."/>
            <person name="Kadner K."/>
            <person name="Kimball H."/>
            <person name="Kobayashi A."/>
            <person name="Lopez F."/>
            <person name="Lou Y."/>
            <person name="Martinez D."/>
            <person name="Medina C."/>
            <person name="Morgan J."/>
            <person name="Nandkeshwar R."/>
            <person name="Noonan J.P."/>
            <person name="Pitluck S."/>
            <person name="Pollard M."/>
            <person name="Predki P."/>
            <person name="Priest J."/>
            <person name="Ramirez L."/>
            <person name="Retterer J."/>
            <person name="Rodriguez A."/>
            <person name="Rogers S."/>
            <person name="Salamov A."/>
            <person name="Salazar A."/>
            <person name="Thayer N."/>
            <person name="Tice H."/>
            <person name="Tsai M."/>
            <person name="Ustaszewska A."/>
            <person name="Vo N."/>
            <person name="Wheeler J."/>
            <person name="Wu K."/>
            <person name="Yang J."/>
            <person name="Dickson M."/>
            <person name="Cheng J.-F."/>
            <person name="Eichler E.E."/>
            <person name="Olsen A."/>
            <person name="Pennacchio L.A."/>
            <person name="Rokhsar D.S."/>
            <person name="Richardson P."/>
            <person name="Lucas S.M."/>
            <person name="Myers R.M."/>
            <person name="Rubin E.M."/>
        </authorList>
    </citation>
    <scope>NUCLEOTIDE SEQUENCE [LARGE SCALE GENOMIC DNA]</scope>
</reference>
<reference key="7">
    <citation type="journal article" date="2004" name="Genome Res.">
        <title>The status, quality, and expansion of the NIH full-length cDNA project: the Mammalian Gene Collection (MGC).</title>
        <authorList>
            <consortium name="The MGC Project Team"/>
        </authorList>
    </citation>
    <scope>NUCLEOTIDE SEQUENCE [LARGE SCALE MRNA]</scope>
</reference>
<reference key="8">
    <citation type="journal article" date="2018" name="Cell Rep.">
        <title>IL-9 and Mast Cells Are Key Players of Candida albicans Commensalism and Pathogenesis in the Gut.</title>
        <authorList>
            <person name="Renga G."/>
            <person name="Moretti S."/>
            <person name="Oikonomou V."/>
            <person name="Borghi M."/>
            <person name="Zelante T."/>
            <person name="Paolicelli G."/>
            <person name="Costantini C."/>
            <person name="De Zuani M."/>
            <person name="Villella V.R."/>
            <person name="Raia V."/>
            <person name="Del Sordo R."/>
            <person name="Bartoli A."/>
            <person name="Baldoni M."/>
            <person name="Renauld J.C."/>
            <person name="Sidoni A."/>
            <person name="Garaci E."/>
            <person name="Maiuri L."/>
            <person name="Pucillo C."/>
            <person name="Romani L."/>
        </authorList>
    </citation>
    <scope>FUNCTION</scope>
</reference>
<sequence length="144" mass="15909">MLLAMVLTSALLLCSVAGQGCPTLAGILDINFLINKMQEDPASKCHCSANVTSCLCLGIPSDNCTRPCFSERLSQMTNTTMQTRYPLIFSRVKKSVEVLKNNKCPYFSCEQPCNQTTAGNALTFLKSLLEIFQKEKMRGMRGKI</sequence>
<comment type="function">
    <text evidence="1 3">Multifunctional cytokine secreted mainly by T-helper 2 lymphocytes and also mast cells or NKT cells that plays important roles in the immune response against parasites (PubMed:29742432). Affects intestinal epithelial permeability and adaptive immunity (PubMed:29742432). In addition, induces the differentiation of specific T-cell subsets such as IL-17 producing helper T-cells (TH17) and also proliferation and differentiation of mast cells. Mechanistically, exerts its biological effects through a receptor composed of IL9R subunit and a signal transducing subunit IL2RG. Receptor stimulation results in the rapid activation of JAK1 and JAK3 kinase activities leading to STAT1, STAT3 and STAT5-mediated transcriptional programs. Induction of differentiation genes seems to be mediated by STAT1 alone, while protection of cells from apoptosis depends on STAT3 and STAT5.</text>
</comment>
<comment type="subunit">
    <text evidence="1">Interacts with IL9R. Interacts with IL2RG.</text>
</comment>
<comment type="subcellular location">
    <subcellularLocation>
        <location>Secreted</location>
    </subcellularLocation>
</comment>
<comment type="similarity">
    <text evidence="5">Belongs to the IL-7/IL-9 family.</text>
</comment>
<comment type="online information" name="Wikipedia">
    <link uri="https://en.wikipedia.org/wiki/Interleukin_9"/>
    <text>Interleukin-9 entry</text>
</comment>
<gene>
    <name type="primary">IL9</name>
</gene>
<keyword id="KW-0002">3D-structure</keyword>
<keyword id="KW-0202">Cytokine</keyword>
<keyword id="KW-0325">Glycoprotein</keyword>
<keyword id="KW-0339">Growth factor</keyword>
<keyword id="KW-0873">Pyrrolidone carboxylic acid</keyword>
<keyword id="KW-1185">Reference proteome</keyword>
<keyword id="KW-0964">Secreted</keyword>
<keyword id="KW-0732">Signal</keyword>
<protein>
    <recommendedName>
        <fullName>Interleukin-9</fullName>
        <shortName>IL-9</shortName>
    </recommendedName>
    <alternativeName>
        <fullName>Cytokine P40</fullName>
    </alternativeName>
    <alternativeName>
        <fullName>T-cell growth factor P40</fullName>
    </alternativeName>
</protein>
<organism>
    <name type="scientific">Homo sapiens</name>
    <name type="common">Human</name>
    <dbReference type="NCBI Taxonomy" id="9606"/>
    <lineage>
        <taxon>Eukaryota</taxon>
        <taxon>Metazoa</taxon>
        <taxon>Chordata</taxon>
        <taxon>Craniata</taxon>
        <taxon>Vertebrata</taxon>
        <taxon>Euteleostomi</taxon>
        <taxon>Mammalia</taxon>
        <taxon>Eutheria</taxon>
        <taxon>Euarchontoglires</taxon>
        <taxon>Primates</taxon>
        <taxon>Haplorrhini</taxon>
        <taxon>Catarrhini</taxon>
        <taxon>Hominidae</taxon>
        <taxon>Homo</taxon>
    </lineage>
</organism>